<evidence type="ECO:0000255" key="1">
    <source>
        <dbReference type="HAMAP-Rule" id="MF_00372"/>
    </source>
</evidence>
<accession>A9KV78</accession>
<protein>
    <recommendedName>
        <fullName evidence="1">Imidazolonepropionase</fullName>
        <ecNumber evidence="1">3.5.2.7</ecNumber>
    </recommendedName>
    <alternativeName>
        <fullName evidence="1">Imidazolone-5-propionate hydrolase</fullName>
    </alternativeName>
</protein>
<proteinExistence type="inferred from homology"/>
<keyword id="KW-0963">Cytoplasm</keyword>
<keyword id="KW-0369">Histidine metabolism</keyword>
<keyword id="KW-0378">Hydrolase</keyword>
<keyword id="KW-0408">Iron</keyword>
<keyword id="KW-0479">Metal-binding</keyword>
<keyword id="KW-0862">Zinc</keyword>
<organism>
    <name type="scientific">Shewanella baltica (strain OS195)</name>
    <dbReference type="NCBI Taxonomy" id="399599"/>
    <lineage>
        <taxon>Bacteria</taxon>
        <taxon>Pseudomonadati</taxon>
        <taxon>Pseudomonadota</taxon>
        <taxon>Gammaproteobacteria</taxon>
        <taxon>Alteromonadales</taxon>
        <taxon>Shewanellaceae</taxon>
        <taxon>Shewanella</taxon>
    </lineage>
</organism>
<dbReference type="EC" id="3.5.2.7" evidence="1"/>
<dbReference type="EMBL" id="CP000891">
    <property type="protein sequence ID" value="ABX47282.1"/>
    <property type="molecule type" value="Genomic_DNA"/>
</dbReference>
<dbReference type="RefSeq" id="WP_006084864.1">
    <property type="nucleotide sequence ID" value="NC_009997.1"/>
</dbReference>
<dbReference type="SMR" id="A9KV78"/>
<dbReference type="GeneID" id="11770464"/>
<dbReference type="KEGG" id="sbn:Sbal195_0100"/>
<dbReference type="HOGENOM" id="CLU_041647_0_0_6"/>
<dbReference type="UniPathway" id="UPA00379">
    <property type="reaction ID" value="UER00551"/>
</dbReference>
<dbReference type="Proteomes" id="UP000000770">
    <property type="component" value="Chromosome"/>
</dbReference>
<dbReference type="GO" id="GO:0005737">
    <property type="term" value="C:cytoplasm"/>
    <property type="evidence" value="ECO:0007669"/>
    <property type="project" value="UniProtKB-SubCell"/>
</dbReference>
<dbReference type="GO" id="GO:0050480">
    <property type="term" value="F:imidazolonepropionase activity"/>
    <property type="evidence" value="ECO:0007669"/>
    <property type="project" value="UniProtKB-UniRule"/>
</dbReference>
<dbReference type="GO" id="GO:0005506">
    <property type="term" value="F:iron ion binding"/>
    <property type="evidence" value="ECO:0007669"/>
    <property type="project" value="UniProtKB-UniRule"/>
</dbReference>
<dbReference type="GO" id="GO:0008270">
    <property type="term" value="F:zinc ion binding"/>
    <property type="evidence" value="ECO:0007669"/>
    <property type="project" value="UniProtKB-UniRule"/>
</dbReference>
<dbReference type="GO" id="GO:0019556">
    <property type="term" value="P:L-histidine catabolic process to glutamate and formamide"/>
    <property type="evidence" value="ECO:0007669"/>
    <property type="project" value="UniProtKB-UniPathway"/>
</dbReference>
<dbReference type="GO" id="GO:0019557">
    <property type="term" value="P:L-histidine catabolic process to glutamate and formate"/>
    <property type="evidence" value="ECO:0007669"/>
    <property type="project" value="UniProtKB-UniPathway"/>
</dbReference>
<dbReference type="CDD" id="cd01296">
    <property type="entry name" value="Imidazolone-5PH"/>
    <property type="match status" value="1"/>
</dbReference>
<dbReference type="FunFam" id="3.20.20.140:FF:000007">
    <property type="entry name" value="Imidazolonepropionase"/>
    <property type="match status" value="1"/>
</dbReference>
<dbReference type="Gene3D" id="3.20.20.140">
    <property type="entry name" value="Metal-dependent hydrolases"/>
    <property type="match status" value="1"/>
</dbReference>
<dbReference type="Gene3D" id="2.30.40.10">
    <property type="entry name" value="Urease, subunit C, domain 1"/>
    <property type="match status" value="1"/>
</dbReference>
<dbReference type="HAMAP" id="MF_00372">
    <property type="entry name" value="HutI"/>
    <property type="match status" value="1"/>
</dbReference>
<dbReference type="InterPro" id="IPR006680">
    <property type="entry name" value="Amidohydro-rel"/>
</dbReference>
<dbReference type="InterPro" id="IPR005920">
    <property type="entry name" value="HutI"/>
</dbReference>
<dbReference type="InterPro" id="IPR011059">
    <property type="entry name" value="Metal-dep_hydrolase_composite"/>
</dbReference>
<dbReference type="InterPro" id="IPR032466">
    <property type="entry name" value="Metal_Hydrolase"/>
</dbReference>
<dbReference type="NCBIfam" id="TIGR01224">
    <property type="entry name" value="hutI"/>
    <property type="match status" value="1"/>
</dbReference>
<dbReference type="PANTHER" id="PTHR42752">
    <property type="entry name" value="IMIDAZOLONEPROPIONASE"/>
    <property type="match status" value="1"/>
</dbReference>
<dbReference type="PANTHER" id="PTHR42752:SF1">
    <property type="entry name" value="IMIDAZOLONEPROPIONASE-RELATED"/>
    <property type="match status" value="1"/>
</dbReference>
<dbReference type="Pfam" id="PF01979">
    <property type="entry name" value="Amidohydro_1"/>
    <property type="match status" value="1"/>
</dbReference>
<dbReference type="SUPFAM" id="SSF51338">
    <property type="entry name" value="Composite domain of metallo-dependent hydrolases"/>
    <property type="match status" value="1"/>
</dbReference>
<dbReference type="SUPFAM" id="SSF51556">
    <property type="entry name" value="Metallo-dependent hydrolases"/>
    <property type="match status" value="1"/>
</dbReference>
<comment type="function">
    <text evidence="1">Catalyzes the hydrolytic cleavage of the carbon-nitrogen bond in imidazolone-5-propanoate to yield N-formimidoyl-L-glutamate. It is the third step in the universal histidine degradation pathway.</text>
</comment>
<comment type="catalytic activity">
    <reaction evidence="1">
        <text>4-imidazolone-5-propanoate + H2O = N-formimidoyl-L-glutamate</text>
        <dbReference type="Rhea" id="RHEA:23660"/>
        <dbReference type="ChEBI" id="CHEBI:15377"/>
        <dbReference type="ChEBI" id="CHEBI:58928"/>
        <dbReference type="ChEBI" id="CHEBI:77893"/>
        <dbReference type="EC" id="3.5.2.7"/>
    </reaction>
</comment>
<comment type="cofactor">
    <cofactor evidence="1">
        <name>Zn(2+)</name>
        <dbReference type="ChEBI" id="CHEBI:29105"/>
    </cofactor>
    <cofactor evidence="1">
        <name>Fe(3+)</name>
        <dbReference type="ChEBI" id="CHEBI:29034"/>
    </cofactor>
    <text evidence="1">Binds 1 zinc or iron ion per subunit.</text>
</comment>
<comment type="pathway">
    <text evidence="1">Amino-acid degradation; L-histidine degradation into L-glutamate; N-formimidoyl-L-glutamate from L-histidine: step 3/3.</text>
</comment>
<comment type="subcellular location">
    <subcellularLocation>
        <location evidence="1">Cytoplasm</location>
    </subcellularLocation>
</comment>
<comment type="similarity">
    <text evidence="1">Belongs to the metallo-dependent hydrolases superfamily. HutI family.</text>
</comment>
<gene>
    <name evidence="1" type="primary">hutI</name>
    <name type="ordered locus">Sbal195_0100</name>
</gene>
<feature type="chain" id="PRO_1000079828" description="Imidazolonepropionase">
    <location>
        <begin position="1"/>
        <end position="408"/>
    </location>
</feature>
<feature type="binding site" evidence="1">
    <location>
        <position position="73"/>
    </location>
    <ligand>
        <name>Fe(3+)</name>
        <dbReference type="ChEBI" id="CHEBI:29034"/>
    </ligand>
</feature>
<feature type="binding site" evidence="1">
    <location>
        <position position="73"/>
    </location>
    <ligand>
        <name>Zn(2+)</name>
        <dbReference type="ChEBI" id="CHEBI:29105"/>
    </ligand>
</feature>
<feature type="binding site" evidence="1">
    <location>
        <position position="75"/>
    </location>
    <ligand>
        <name>Fe(3+)</name>
        <dbReference type="ChEBI" id="CHEBI:29034"/>
    </ligand>
</feature>
<feature type="binding site" evidence="1">
    <location>
        <position position="75"/>
    </location>
    <ligand>
        <name>Zn(2+)</name>
        <dbReference type="ChEBI" id="CHEBI:29105"/>
    </ligand>
</feature>
<feature type="binding site" evidence="1">
    <location>
        <position position="82"/>
    </location>
    <ligand>
        <name>4-imidazolone-5-propanoate</name>
        <dbReference type="ChEBI" id="CHEBI:77893"/>
    </ligand>
</feature>
<feature type="binding site" evidence="1">
    <location>
        <position position="145"/>
    </location>
    <ligand>
        <name>4-imidazolone-5-propanoate</name>
        <dbReference type="ChEBI" id="CHEBI:77893"/>
    </ligand>
</feature>
<feature type="binding site" evidence="1">
    <location>
        <position position="145"/>
    </location>
    <ligand>
        <name>N-formimidoyl-L-glutamate</name>
        <dbReference type="ChEBI" id="CHEBI:58928"/>
    </ligand>
</feature>
<feature type="binding site" evidence="1">
    <location>
        <position position="178"/>
    </location>
    <ligand>
        <name>4-imidazolone-5-propanoate</name>
        <dbReference type="ChEBI" id="CHEBI:77893"/>
    </ligand>
</feature>
<feature type="binding site" evidence="1">
    <location>
        <position position="243"/>
    </location>
    <ligand>
        <name>Fe(3+)</name>
        <dbReference type="ChEBI" id="CHEBI:29034"/>
    </ligand>
</feature>
<feature type="binding site" evidence="1">
    <location>
        <position position="243"/>
    </location>
    <ligand>
        <name>Zn(2+)</name>
        <dbReference type="ChEBI" id="CHEBI:29105"/>
    </ligand>
</feature>
<feature type="binding site" evidence="1">
    <location>
        <position position="246"/>
    </location>
    <ligand>
        <name>4-imidazolone-5-propanoate</name>
        <dbReference type="ChEBI" id="CHEBI:77893"/>
    </ligand>
</feature>
<feature type="binding site" evidence="1">
    <location>
        <position position="318"/>
    </location>
    <ligand>
        <name>Fe(3+)</name>
        <dbReference type="ChEBI" id="CHEBI:29034"/>
    </ligand>
</feature>
<feature type="binding site" evidence="1">
    <location>
        <position position="318"/>
    </location>
    <ligand>
        <name>Zn(2+)</name>
        <dbReference type="ChEBI" id="CHEBI:29105"/>
    </ligand>
</feature>
<feature type="binding site" evidence="1">
    <location>
        <position position="320"/>
    </location>
    <ligand>
        <name>N-formimidoyl-L-glutamate</name>
        <dbReference type="ChEBI" id="CHEBI:58928"/>
    </ligand>
</feature>
<feature type="binding site" evidence="1">
    <location>
        <position position="322"/>
    </location>
    <ligand>
        <name>N-formimidoyl-L-glutamate</name>
        <dbReference type="ChEBI" id="CHEBI:58928"/>
    </ligand>
</feature>
<feature type="binding site" evidence="1">
    <location>
        <position position="323"/>
    </location>
    <ligand>
        <name>4-imidazolone-5-propanoate</name>
        <dbReference type="ChEBI" id="CHEBI:77893"/>
    </ligand>
</feature>
<sequence>MSWDQVWIDVNLATMDPSISAPYGAITNAAMAVKDGKIAWLGPRSELPAFDVLSIPVYRGKGGWITPGLIDAHTHLIFAGNRANEFELRLQGASYEEIARSGGGIISTVKACREADEAELFELGRQRLNALAKEGVTTVEIKSGYGLDTETELKILRVARELGKHHHVDVKTTFLGAHAIPPEYKDNSDGYVDLIINKMLPAVIAENLADAVDVFCENIAFNLEQTERVLSAAKAAGLEIKLHAEQLTNMGGSALAARLGAKSVDHIEYLDEAGVKALSESGTCAVLLPGAFYFLRETQKPPIDLLRQYGVPMVLASDFNPGSSPICSTLLMLNMGCTLFRLTPEEALKGLTLNAAKALGIEDNVGSLLVGKQADFCLWDIATPAQLAYSYGVNPCKDVVKNGKLVHQ</sequence>
<name>HUTI_SHEB9</name>
<reference key="1">
    <citation type="submission" date="2007-11" db="EMBL/GenBank/DDBJ databases">
        <title>Complete sequence of chromosome of Shewanella baltica OS195.</title>
        <authorList>
            <consortium name="US DOE Joint Genome Institute"/>
            <person name="Copeland A."/>
            <person name="Lucas S."/>
            <person name="Lapidus A."/>
            <person name="Barry K."/>
            <person name="Glavina del Rio T."/>
            <person name="Dalin E."/>
            <person name="Tice H."/>
            <person name="Pitluck S."/>
            <person name="Chain P."/>
            <person name="Malfatti S."/>
            <person name="Shin M."/>
            <person name="Vergez L."/>
            <person name="Schmutz J."/>
            <person name="Larimer F."/>
            <person name="Land M."/>
            <person name="Hauser L."/>
            <person name="Kyrpides N."/>
            <person name="Kim E."/>
            <person name="Brettar I."/>
            <person name="Rodrigues J."/>
            <person name="Konstantinidis K."/>
            <person name="Klappenbach J."/>
            <person name="Hofle M."/>
            <person name="Tiedje J."/>
            <person name="Richardson P."/>
        </authorList>
    </citation>
    <scope>NUCLEOTIDE SEQUENCE [LARGE SCALE GENOMIC DNA]</scope>
    <source>
        <strain>OS195</strain>
    </source>
</reference>